<name>BRNQL_STAHJ</name>
<feature type="chain" id="PRO_0000294022" description="Putative branched-chain amino acid carrier protein SH1502">
    <location>
        <begin position="1"/>
        <end position="447"/>
    </location>
</feature>
<feature type="transmembrane region" description="Helical" evidence="1">
    <location>
        <begin position="6"/>
        <end position="26"/>
    </location>
</feature>
<feature type="transmembrane region" description="Helical" evidence="1">
    <location>
        <begin position="40"/>
        <end position="60"/>
    </location>
</feature>
<feature type="transmembrane region" description="Helical" evidence="1">
    <location>
        <begin position="74"/>
        <end position="94"/>
    </location>
</feature>
<feature type="transmembrane region" description="Helical" evidence="1">
    <location>
        <begin position="116"/>
        <end position="136"/>
    </location>
</feature>
<feature type="transmembrane region" description="Helical" evidence="1">
    <location>
        <begin position="143"/>
        <end position="163"/>
    </location>
</feature>
<feature type="transmembrane region" description="Helical" evidence="1">
    <location>
        <begin position="193"/>
        <end position="213"/>
    </location>
</feature>
<feature type="transmembrane region" description="Helical" evidence="1">
    <location>
        <begin position="229"/>
        <end position="249"/>
    </location>
</feature>
<feature type="transmembrane region" description="Helical" evidence="1">
    <location>
        <begin position="270"/>
        <end position="287"/>
    </location>
</feature>
<feature type="transmembrane region" description="Helical" evidence="1">
    <location>
        <begin position="290"/>
        <end position="310"/>
    </location>
</feature>
<feature type="transmembrane region" description="Helical" evidence="1">
    <location>
        <begin position="328"/>
        <end position="348"/>
    </location>
</feature>
<feature type="transmembrane region" description="Helical" evidence="1">
    <location>
        <begin position="350"/>
        <end position="370"/>
    </location>
</feature>
<feature type="transmembrane region" description="Helical" evidence="1">
    <location>
        <begin position="382"/>
        <end position="402"/>
    </location>
</feature>
<feature type="transmembrane region" description="Helical" evidence="1">
    <location>
        <begin position="417"/>
        <end position="437"/>
    </location>
</feature>
<sequence>MNKNTWIVGFTLFAMFFGAGNLIFPPNLGQDSGHFFWPAVIAFCLTGIGLPLLGVIVGALDKQGYVGSLNKISPKFSVIFLIIIYLTIGPLFAIPRTASTSFEMTVTPIAHTNSNLVLFIFTLIYFLVVLYLCINPGKIVDRIGSLLTPLLLITILAMIIKGFVDYSGNAPSHGNQVDYNSAIGSFSKGFTEGYLTMDAIAAIAFSMIVVNAIKATGVKHANQIFKQTVMSGLIAAIALVFIYVSLGFIGNHMNVDNATLKNLTAKYQNVGAYLLTTMAANSFGVFGKYLLGIIVALACLTTACGLIVSVSQYFNRIFPKVSYKAYTIFFTLISFILANLGLNAVISMSVPVLSVIYPIAITVVLLILLARFIPTKPIAQQIPIAVISIVSILSVISTNGWVKMSFIEALPLKQYSLEWFPIAVVATIIGYVVAKFVNQDHIVYQKE</sequence>
<reference key="1">
    <citation type="journal article" date="2005" name="J. Bacteriol.">
        <title>Whole-genome sequencing of Staphylococcus haemolyticus uncovers the extreme plasticity of its genome and the evolution of human-colonizing staphylococcal species.</title>
        <authorList>
            <person name="Takeuchi F."/>
            <person name="Watanabe S."/>
            <person name="Baba T."/>
            <person name="Yuzawa H."/>
            <person name="Ito T."/>
            <person name="Morimoto Y."/>
            <person name="Kuroda M."/>
            <person name="Cui L."/>
            <person name="Takahashi M."/>
            <person name="Ankai A."/>
            <person name="Baba S."/>
            <person name="Fukui S."/>
            <person name="Lee J.C."/>
            <person name="Hiramatsu K."/>
        </authorList>
    </citation>
    <scope>NUCLEOTIDE SEQUENCE [LARGE SCALE GENOMIC DNA]</scope>
    <source>
        <strain>JCSC1435</strain>
    </source>
</reference>
<evidence type="ECO:0000255" key="1"/>
<evidence type="ECO:0000305" key="2"/>
<organism>
    <name type="scientific">Staphylococcus haemolyticus (strain JCSC1435)</name>
    <dbReference type="NCBI Taxonomy" id="279808"/>
    <lineage>
        <taxon>Bacteria</taxon>
        <taxon>Bacillati</taxon>
        <taxon>Bacillota</taxon>
        <taxon>Bacilli</taxon>
        <taxon>Bacillales</taxon>
        <taxon>Staphylococcaceae</taxon>
        <taxon>Staphylococcus</taxon>
    </lineage>
</organism>
<accession>Q4L6B4</accession>
<comment type="function">
    <text evidence="2">Component of the transport system for branched-chain amino acids (leucine, isoleucine and valine), which is coupled to a proton motive force.</text>
</comment>
<comment type="subcellular location">
    <subcellularLocation>
        <location evidence="2">Cell membrane</location>
        <topology evidence="2">Multi-pass membrane protein</topology>
    </subcellularLocation>
</comment>
<comment type="similarity">
    <text evidence="2">Belongs to the branched chain amino acid transporter family.</text>
</comment>
<protein>
    <recommendedName>
        <fullName>Putative branched-chain amino acid carrier protein SH1502</fullName>
    </recommendedName>
</protein>
<keyword id="KW-0029">Amino-acid transport</keyword>
<keyword id="KW-1003">Cell membrane</keyword>
<keyword id="KW-0472">Membrane</keyword>
<keyword id="KW-0812">Transmembrane</keyword>
<keyword id="KW-1133">Transmembrane helix</keyword>
<keyword id="KW-0813">Transport</keyword>
<dbReference type="EMBL" id="AP006716">
    <property type="protein sequence ID" value="BAE04811.1"/>
    <property type="molecule type" value="Genomic_DNA"/>
</dbReference>
<dbReference type="RefSeq" id="WP_011275796.1">
    <property type="nucleotide sequence ID" value="NC_007168.1"/>
</dbReference>
<dbReference type="KEGG" id="sha:SH1502"/>
<dbReference type="eggNOG" id="COG1114">
    <property type="taxonomic scope" value="Bacteria"/>
</dbReference>
<dbReference type="HOGENOM" id="CLU_036807_0_1_9"/>
<dbReference type="OrthoDB" id="9783920at2"/>
<dbReference type="Proteomes" id="UP000000543">
    <property type="component" value="Chromosome"/>
</dbReference>
<dbReference type="GO" id="GO:0005886">
    <property type="term" value="C:plasma membrane"/>
    <property type="evidence" value="ECO:0007669"/>
    <property type="project" value="UniProtKB-SubCell"/>
</dbReference>
<dbReference type="GO" id="GO:0015188">
    <property type="term" value="F:L-isoleucine transmembrane transporter activity"/>
    <property type="evidence" value="ECO:0007669"/>
    <property type="project" value="TreeGrafter"/>
</dbReference>
<dbReference type="GO" id="GO:0015190">
    <property type="term" value="F:L-leucine transmembrane transporter activity"/>
    <property type="evidence" value="ECO:0007669"/>
    <property type="project" value="TreeGrafter"/>
</dbReference>
<dbReference type="GO" id="GO:0005304">
    <property type="term" value="F:L-valine transmembrane transporter activity"/>
    <property type="evidence" value="ECO:0007669"/>
    <property type="project" value="TreeGrafter"/>
</dbReference>
<dbReference type="GO" id="GO:0015818">
    <property type="term" value="P:isoleucine transport"/>
    <property type="evidence" value="ECO:0007669"/>
    <property type="project" value="TreeGrafter"/>
</dbReference>
<dbReference type="GO" id="GO:0015820">
    <property type="term" value="P:L-leucine transport"/>
    <property type="evidence" value="ECO:0007669"/>
    <property type="project" value="TreeGrafter"/>
</dbReference>
<dbReference type="Gene3D" id="1.20.1740.10">
    <property type="entry name" value="Amino acid/polyamine transporter I"/>
    <property type="match status" value="1"/>
</dbReference>
<dbReference type="InterPro" id="IPR004685">
    <property type="entry name" value="Brnchd-chn_aa_trnsp_Livcs"/>
</dbReference>
<dbReference type="NCBIfam" id="TIGR00796">
    <property type="entry name" value="livcs"/>
    <property type="match status" value="1"/>
</dbReference>
<dbReference type="PANTHER" id="PTHR30588:SF7">
    <property type="entry name" value="BRANCHED-CHAIN AMINO ACID CARRIER PROTEIN SAOUHSC_01411-RELATED"/>
    <property type="match status" value="1"/>
</dbReference>
<dbReference type="PANTHER" id="PTHR30588">
    <property type="entry name" value="BRANCHED-CHAIN AMINO ACID TRANSPORT SYSTEM 2 CARRIER PROTEIN"/>
    <property type="match status" value="1"/>
</dbReference>
<dbReference type="Pfam" id="PF05525">
    <property type="entry name" value="Branch_AA_trans"/>
    <property type="match status" value="1"/>
</dbReference>
<gene>
    <name type="ordered locus">SH1502</name>
</gene>
<proteinExistence type="inferred from homology"/>